<proteinExistence type="evidence at protein level"/>
<comment type="function">
    <text evidence="9">May play a role in protein folding in the endoplasmic reticulum.</text>
</comment>
<comment type="subunit">
    <text evidence="5">Interacts with BIP1.</text>
</comment>
<comment type="subcellular location">
    <subcellularLocation>
        <location evidence="5">Endoplasmic reticulum lumen</location>
    </subcellularLocation>
    <text evidence="5">Localizes to the endoplasmic reticulum (ER) and to punctae around the ER.</text>
</comment>
<comment type="induction">
    <text evidence="5">By dithiothreitol- and tunicamycin-induced endoplasmic reticulum (ER) stress response.</text>
</comment>
<comment type="sequence caution" evidence="8">
    <conflict type="erroneous gene model prediction">
        <sequence resource="EMBL-CDS" id="BAF07486"/>
    </conflict>
</comment>
<comment type="sequence caution" evidence="8">
    <conflict type="erroneous gene model prediction">
        <sequence resource="EMBL-CDS" id="BAS76481"/>
    </conflict>
</comment>
<dbReference type="EMBL" id="AP003228">
    <property type="protein sequence ID" value="BAD87042.1"/>
    <property type="molecule type" value="Genomic_DNA"/>
</dbReference>
<dbReference type="EMBL" id="AP008207">
    <property type="protein sequence ID" value="BAF07486.2"/>
    <property type="status" value="ALT_SEQ"/>
    <property type="molecule type" value="Genomic_DNA"/>
</dbReference>
<dbReference type="EMBL" id="AP014957">
    <property type="protein sequence ID" value="BAS76481.1"/>
    <property type="status" value="ALT_SEQ"/>
    <property type="molecule type" value="Genomic_DNA"/>
</dbReference>
<dbReference type="RefSeq" id="NP_001388658.1">
    <property type="nucleotide sequence ID" value="NM_001401729.1"/>
</dbReference>
<dbReference type="RefSeq" id="XP_015622518.1">
    <property type="nucleotide sequence ID" value="XM_015767032.1"/>
</dbReference>
<dbReference type="SMR" id="Q5JNB5"/>
<dbReference type="FunCoup" id="Q5JNB5">
    <property type="interactions" value="3216"/>
</dbReference>
<dbReference type="STRING" id="39947.Q5JNB5"/>
<dbReference type="GlyCosmos" id="Q5JNB5">
    <property type="glycosylation" value="1 site, No reported glycans"/>
</dbReference>
<dbReference type="PaxDb" id="39947-Q5JNB5"/>
<dbReference type="GeneID" id="4327812"/>
<dbReference type="KEGG" id="dosa:Os01g0977200"/>
<dbReference type="HOGENOM" id="CLU_015935_0_0_1"/>
<dbReference type="InParanoid" id="Q5JNB5"/>
<dbReference type="OrthoDB" id="10250354at2759"/>
<dbReference type="Proteomes" id="UP000000763">
    <property type="component" value="Chromosome 1"/>
</dbReference>
<dbReference type="Proteomes" id="UP000059680">
    <property type="component" value="Chromosome 1"/>
</dbReference>
<dbReference type="GO" id="GO:0005788">
    <property type="term" value="C:endoplasmic reticulum lumen"/>
    <property type="evidence" value="ECO:0000314"/>
    <property type="project" value="UniProtKB"/>
</dbReference>
<dbReference type="CDD" id="cd06257">
    <property type="entry name" value="DnaJ"/>
    <property type="match status" value="1"/>
</dbReference>
<dbReference type="FunFam" id="1.25.40.10:FF:000258">
    <property type="entry name" value="DnaJ domain containing protein"/>
    <property type="match status" value="1"/>
</dbReference>
<dbReference type="FunFam" id="1.10.287.110:FF:000055">
    <property type="entry name" value="DnaJ subfamily C member 7"/>
    <property type="match status" value="1"/>
</dbReference>
<dbReference type="Gene3D" id="1.10.287.110">
    <property type="entry name" value="DnaJ domain"/>
    <property type="match status" value="1"/>
</dbReference>
<dbReference type="Gene3D" id="1.25.40.10">
    <property type="entry name" value="Tetratricopeptide repeat domain"/>
    <property type="match status" value="1"/>
</dbReference>
<dbReference type="InterPro" id="IPR001623">
    <property type="entry name" value="DnaJ_domain"/>
</dbReference>
<dbReference type="InterPro" id="IPR018253">
    <property type="entry name" value="DnaJ_domain_CS"/>
</dbReference>
<dbReference type="InterPro" id="IPR036869">
    <property type="entry name" value="J_dom_sf"/>
</dbReference>
<dbReference type="InterPro" id="IPR011990">
    <property type="entry name" value="TPR-like_helical_dom_sf"/>
</dbReference>
<dbReference type="InterPro" id="IPR019734">
    <property type="entry name" value="TPR_rpt"/>
</dbReference>
<dbReference type="PANTHER" id="PTHR45188:SF2">
    <property type="entry name" value="DNAJ HOMOLOG SUBFAMILY C MEMBER 7"/>
    <property type="match status" value="1"/>
</dbReference>
<dbReference type="PANTHER" id="PTHR45188">
    <property type="entry name" value="DNAJ PROTEIN P58IPK HOMOLOG"/>
    <property type="match status" value="1"/>
</dbReference>
<dbReference type="Pfam" id="PF00226">
    <property type="entry name" value="DnaJ"/>
    <property type="match status" value="1"/>
</dbReference>
<dbReference type="Pfam" id="PF13432">
    <property type="entry name" value="TPR_16"/>
    <property type="match status" value="1"/>
</dbReference>
<dbReference type="Pfam" id="PF13181">
    <property type="entry name" value="TPR_8"/>
    <property type="match status" value="1"/>
</dbReference>
<dbReference type="PRINTS" id="PR00625">
    <property type="entry name" value="JDOMAIN"/>
</dbReference>
<dbReference type="SMART" id="SM00271">
    <property type="entry name" value="DnaJ"/>
    <property type="match status" value="1"/>
</dbReference>
<dbReference type="SMART" id="SM00028">
    <property type="entry name" value="TPR"/>
    <property type="match status" value="5"/>
</dbReference>
<dbReference type="SUPFAM" id="SSF46565">
    <property type="entry name" value="Chaperone J-domain"/>
    <property type="match status" value="1"/>
</dbReference>
<dbReference type="SUPFAM" id="SSF48452">
    <property type="entry name" value="TPR-like"/>
    <property type="match status" value="1"/>
</dbReference>
<dbReference type="PROSITE" id="PS00636">
    <property type="entry name" value="DNAJ_1"/>
    <property type="match status" value="1"/>
</dbReference>
<dbReference type="PROSITE" id="PS50076">
    <property type="entry name" value="DNAJ_2"/>
    <property type="match status" value="1"/>
</dbReference>
<dbReference type="PROSITE" id="PS50005">
    <property type="entry name" value="TPR"/>
    <property type="match status" value="5"/>
</dbReference>
<dbReference type="PROSITE" id="PS50293">
    <property type="entry name" value="TPR_REGION"/>
    <property type="match status" value="1"/>
</dbReference>
<keyword id="KW-0143">Chaperone</keyword>
<keyword id="KW-0256">Endoplasmic reticulum</keyword>
<keyword id="KW-0325">Glycoprotein</keyword>
<keyword id="KW-1185">Reference proteome</keyword>
<keyword id="KW-0677">Repeat</keyword>
<keyword id="KW-0732">Signal</keyword>
<keyword id="KW-0802">TPR repeat</keyword>
<evidence type="ECO:0000255" key="1"/>
<evidence type="ECO:0000255" key="2">
    <source>
        <dbReference type="PROSITE-ProRule" id="PRU00286"/>
    </source>
</evidence>
<evidence type="ECO:0000255" key="3">
    <source>
        <dbReference type="PROSITE-ProRule" id="PRU00339"/>
    </source>
</evidence>
<evidence type="ECO:0000255" key="4">
    <source>
        <dbReference type="PROSITE-ProRule" id="PRU00498"/>
    </source>
</evidence>
<evidence type="ECO:0000269" key="5">
    <source>
    </source>
</evidence>
<evidence type="ECO:0000303" key="6">
    <source>
    </source>
</evidence>
<evidence type="ECO:0000303" key="7">
    <source>
    </source>
</evidence>
<evidence type="ECO:0000305" key="8"/>
<evidence type="ECO:0000305" key="9">
    <source>
    </source>
</evidence>
<evidence type="ECO:0000312" key="10">
    <source>
        <dbReference type="EMBL" id="BAD87042.1"/>
    </source>
</evidence>
<evidence type="ECO:0000312" key="11">
    <source>
        <dbReference type="EMBL" id="BAS76481.1"/>
    </source>
</evidence>
<sequence>MARWPWRWRVLLPLLLLHSSPVFAQEGQDNDPSTLFKRASEMMNLRKYDGSLGLLNAVLEVDPNHSEAYRQRASVLRHKCRYKEAEGDYSKYLELKPGSSSVEKELSQLLQAQNALESAYGQFESHDFSKVLEYINKIVLVFSPNCLKAKLLKAKALLALEDYSSVISETGFILKEDEDNLDALLLRGRAYYYLADHDVASRHYQKGLRLDPEHSELKKAYFGLKNLLKKTKSAEDNAAKGKLRVSAEDYKAALAMDPDHTSYNVHLYLGLCKVLVKLGRGKEAISSCTEALNIDGELVDALTQRGEAKLLTEDWEGAVQDLKEASQKSPQDMGIREALMRAEKQLKLSKRKDWYKILGISKTASAADIKRAYKKLALQWHPDKNVDNREEAENMFREIAAAYEVLGDEDKRVRYDRGEDLDEMNMGGGGGGFNPFGGGGQQYTFHYDGGFYGGGGFPGGGFPGGFQFNFG</sequence>
<organism>
    <name type="scientific">Oryza sativa subsp. japonica</name>
    <name type="common">Rice</name>
    <dbReference type="NCBI Taxonomy" id="39947"/>
    <lineage>
        <taxon>Eukaryota</taxon>
        <taxon>Viridiplantae</taxon>
        <taxon>Streptophyta</taxon>
        <taxon>Embryophyta</taxon>
        <taxon>Tracheophyta</taxon>
        <taxon>Spermatophyta</taxon>
        <taxon>Magnoliopsida</taxon>
        <taxon>Liliopsida</taxon>
        <taxon>Poales</taxon>
        <taxon>Poaceae</taxon>
        <taxon>BOP clade</taxon>
        <taxon>Oryzoideae</taxon>
        <taxon>Oryzeae</taxon>
        <taxon>Oryzinae</taxon>
        <taxon>Oryza</taxon>
        <taxon>Oryza sativa</taxon>
    </lineage>
</organism>
<protein>
    <recommendedName>
        <fullName evidence="8">DnaJ protein P58IPK homolog B</fullName>
        <shortName evidence="7">OsP58B</shortName>
    </recommendedName>
    <alternativeName>
        <fullName evidence="8">Chaperone protein dnaJ C15</fullName>
        <shortName evidence="6">OsDjC15</shortName>
    </alternativeName>
</protein>
<name>DJC15_ORYSJ</name>
<gene>
    <name evidence="7" type="primary">P58B</name>
    <name evidence="8" type="synonym">DJC15</name>
    <name evidence="11" type="ordered locus">Os01g0977200</name>
    <name evidence="8" type="ordered locus">LOC_Os01g74580</name>
    <name evidence="10" type="ORF">P0020E09.19</name>
</gene>
<reference key="1">
    <citation type="journal article" date="2002" name="Nature">
        <title>The genome sequence and structure of rice chromosome 1.</title>
        <authorList>
            <person name="Sasaki T."/>
            <person name="Matsumoto T."/>
            <person name="Yamamoto K."/>
            <person name="Sakata K."/>
            <person name="Baba T."/>
            <person name="Katayose Y."/>
            <person name="Wu J."/>
            <person name="Niimura Y."/>
            <person name="Cheng Z."/>
            <person name="Nagamura Y."/>
            <person name="Antonio B.A."/>
            <person name="Kanamori H."/>
            <person name="Hosokawa S."/>
            <person name="Masukawa M."/>
            <person name="Arikawa K."/>
            <person name="Chiden Y."/>
            <person name="Hayashi M."/>
            <person name="Okamoto M."/>
            <person name="Ando T."/>
            <person name="Aoki H."/>
            <person name="Arita K."/>
            <person name="Hamada M."/>
            <person name="Harada C."/>
            <person name="Hijishita S."/>
            <person name="Honda M."/>
            <person name="Ichikawa Y."/>
            <person name="Idonuma A."/>
            <person name="Iijima M."/>
            <person name="Ikeda M."/>
            <person name="Ikeno M."/>
            <person name="Ito S."/>
            <person name="Ito T."/>
            <person name="Ito Y."/>
            <person name="Ito Y."/>
            <person name="Iwabuchi A."/>
            <person name="Kamiya K."/>
            <person name="Karasawa W."/>
            <person name="Katagiri S."/>
            <person name="Kikuta A."/>
            <person name="Kobayashi N."/>
            <person name="Kono I."/>
            <person name="Machita K."/>
            <person name="Maehara T."/>
            <person name="Mizuno H."/>
            <person name="Mizubayashi T."/>
            <person name="Mukai Y."/>
            <person name="Nagasaki H."/>
            <person name="Nakashima M."/>
            <person name="Nakama Y."/>
            <person name="Nakamichi Y."/>
            <person name="Nakamura M."/>
            <person name="Namiki N."/>
            <person name="Negishi M."/>
            <person name="Ohta I."/>
            <person name="Ono N."/>
            <person name="Saji S."/>
            <person name="Sakai K."/>
            <person name="Shibata M."/>
            <person name="Shimokawa T."/>
            <person name="Shomura A."/>
            <person name="Song J."/>
            <person name="Takazaki Y."/>
            <person name="Terasawa K."/>
            <person name="Tsuji K."/>
            <person name="Waki K."/>
            <person name="Yamagata H."/>
            <person name="Yamane H."/>
            <person name="Yoshiki S."/>
            <person name="Yoshihara R."/>
            <person name="Yukawa K."/>
            <person name="Zhong H."/>
            <person name="Iwama H."/>
            <person name="Endo T."/>
            <person name="Ito H."/>
            <person name="Hahn J.H."/>
            <person name="Kim H.-I."/>
            <person name="Eun M.-Y."/>
            <person name="Yano M."/>
            <person name="Jiang J."/>
            <person name="Gojobori T."/>
        </authorList>
    </citation>
    <scope>NUCLEOTIDE SEQUENCE [LARGE SCALE GENOMIC DNA]</scope>
    <source>
        <strain>cv. Nipponbare</strain>
    </source>
</reference>
<reference key="2">
    <citation type="journal article" date="2005" name="Nature">
        <title>The map-based sequence of the rice genome.</title>
        <authorList>
            <consortium name="International rice genome sequencing project (IRGSP)"/>
        </authorList>
    </citation>
    <scope>NUCLEOTIDE SEQUENCE [LARGE SCALE GENOMIC DNA]</scope>
    <source>
        <strain>cv. Nipponbare</strain>
    </source>
</reference>
<reference key="3">
    <citation type="journal article" date="2008" name="Nucleic Acids Res.">
        <title>The rice annotation project database (RAP-DB): 2008 update.</title>
        <authorList>
            <consortium name="The rice annotation project (RAP)"/>
        </authorList>
    </citation>
    <scope>GENOME REANNOTATION</scope>
    <source>
        <strain>cv. Nipponbare</strain>
    </source>
</reference>
<reference key="4">
    <citation type="journal article" date="2013" name="Rice">
        <title>Improvement of the Oryza sativa Nipponbare reference genome using next generation sequence and optical map data.</title>
        <authorList>
            <person name="Kawahara Y."/>
            <person name="de la Bastide M."/>
            <person name="Hamilton J.P."/>
            <person name="Kanamori H."/>
            <person name="McCombie W.R."/>
            <person name="Ouyang S."/>
            <person name="Schwartz D.C."/>
            <person name="Tanaka T."/>
            <person name="Wu J."/>
            <person name="Zhou S."/>
            <person name="Childs K.L."/>
            <person name="Davidson R.M."/>
            <person name="Lin H."/>
            <person name="Quesada-Ocampo L."/>
            <person name="Vaillancourt B."/>
            <person name="Sakai H."/>
            <person name="Lee S.S."/>
            <person name="Kim J."/>
            <person name="Numa H."/>
            <person name="Itoh T."/>
            <person name="Buell C.R."/>
            <person name="Matsumoto T."/>
        </authorList>
    </citation>
    <scope>GENOME REANNOTATION</scope>
    <source>
        <strain>cv. Nipponbare</strain>
    </source>
</reference>
<reference key="5">
    <citation type="journal article" date="2013" name="Cell Stress Chaperones">
        <title>Functional relevance of J-protein family of rice (Oryza sativa).</title>
        <authorList>
            <person name="Sarkar N.K."/>
            <person name="Thapar U."/>
            <person name="Kundnani P."/>
            <person name="Panwar P."/>
            <person name="Grover A."/>
        </authorList>
    </citation>
    <scope>GENE FAMILY</scope>
    <scope>NOMENCLATURE</scope>
</reference>
<reference key="6">
    <citation type="journal article" date="2013" name="J. Exp. Bot.">
        <title>Analysis of rice ER-resident J-proteins reveals diversity and functional differentiation of the ER-resident Hsp70 system in plants.</title>
        <authorList>
            <person name="Ohta M."/>
            <person name="Wakasa Y."/>
            <person name="Takahashi H."/>
            <person name="Hayashi S."/>
            <person name="Kudo K."/>
            <person name="Takaiwa F."/>
        </authorList>
    </citation>
    <scope>FUNCTION</scope>
    <scope>INTERACTION WITH BIP1</scope>
    <scope>SUBCELLULAR LOCATION</scope>
    <scope>INDUCTION</scope>
</reference>
<feature type="signal peptide" evidence="1">
    <location>
        <begin position="1"/>
        <end position="24"/>
    </location>
</feature>
<feature type="chain" id="PRO_5004258008" description="DnaJ protein P58IPK homolog B">
    <location>
        <begin position="25"/>
        <end position="471"/>
    </location>
</feature>
<feature type="repeat" description="TPR 1" evidence="3">
    <location>
        <begin position="32"/>
        <end position="65"/>
    </location>
</feature>
<feature type="repeat" description="TPR 2" evidence="3">
    <location>
        <begin position="66"/>
        <end position="99"/>
    </location>
</feature>
<feature type="repeat" description="TPR 3" evidence="1">
    <location>
        <begin position="112"/>
        <end position="146"/>
    </location>
</feature>
<feature type="repeat" description="TPR 4" evidence="1">
    <location>
        <begin position="148"/>
        <end position="180"/>
    </location>
</feature>
<feature type="repeat" description="TPR 5" evidence="3">
    <location>
        <begin position="181"/>
        <end position="214"/>
    </location>
</feature>
<feature type="repeat" description="TPR 6" evidence="1">
    <location>
        <begin position="227"/>
        <end position="260"/>
    </location>
</feature>
<feature type="repeat" description="TPR 7" evidence="3">
    <location>
        <begin position="265"/>
        <end position="298"/>
    </location>
</feature>
<feature type="repeat" description="TPR 8" evidence="1">
    <location>
        <begin position="300"/>
        <end position="332"/>
    </location>
</feature>
<feature type="domain" description="J" evidence="2">
    <location>
        <begin position="353"/>
        <end position="419"/>
    </location>
</feature>
<feature type="glycosylation site" description="N-linked (GlcNAc...) asparagine" evidence="4">
    <location>
        <position position="64"/>
    </location>
</feature>
<accession>Q5JNB5</accession>
<accession>A0A0N7KEI1</accession>
<accession>Q0JFJ2</accession>